<accession>P41082</accession>
<evidence type="ECO:0000255" key="1">
    <source>
        <dbReference type="HAMAP-Rule" id="MF_00403"/>
    </source>
</evidence>
<evidence type="ECO:0000256" key="2">
    <source>
        <dbReference type="SAM" id="MobiDB-lite"/>
    </source>
</evidence>
<evidence type="ECO:0000305" key="3"/>
<keyword id="KW-1185">Reference proteome</keyword>
<keyword id="KW-0687">Ribonucleoprotein</keyword>
<keyword id="KW-0689">Ribosomal protein</keyword>
<keyword id="KW-0694">RNA-binding</keyword>
<keyword id="KW-0699">rRNA-binding</keyword>
<keyword id="KW-0820">tRNA-binding</keyword>
<proteinExistence type="inferred from homology"/>
<dbReference type="EMBL" id="U02603">
    <property type="protein sequence ID" value="AAA18329.1"/>
    <property type="molecule type" value="Unassigned_DNA"/>
</dbReference>
<dbReference type="EMBL" id="AJ235270">
    <property type="protein sequence ID" value="CAA14599.1"/>
    <property type="molecule type" value="Genomic_DNA"/>
</dbReference>
<dbReference type="PIR" id="H71722">
    <property type="entry name" value="H71722"/>
</dbReference>
<dbReference type="RefSeq" id="NP_220522.1">
    <property type="nucleotide sequence ID" value="NC_000963.1"/>
</dbReference>
<dbReference type="RefSeq" id="WP_004597174.1">
    <property type="nucleotide sequence ID" value="NC_000963.1"/>
</dbReference>
<dbReference type="SMR" id="P41082"/>
<dbReference type="STRING" id="272947.gene:17555213"/>
<dbReference type="EnsemblBacteria" id="CAA14599">
    <property type="protein sequence ID" value="CAA14599"/>
    <property type="gene ID" value="CAA14599"/>
</dbReference>
<dbReference type="GeneID" id="57569258"/>
<dbReference type="KEGG" id="rpr:RP130"/>
<dbReference type="PATRIC" id="fig|272947.5.peg.132"/>
<dbReference type="eggNOG" id="COG0048">
    <property type="taxonomic scope" value="Bacteria"/>
</dbReference>
<dbReference type="HOGENOM" id="CLU_104295_1_2_5"/>
<dbReference type="OrthoDB" id="9802366at2"/>
<dbReference type="Proteomes" id="UP000002480">
    <property type="component" value="Chromosome"/>
</dbReference>
<dbReference type="GO" id="GO:0015935">
    <property type="term" value="C:small ribosomal subunit"/>
    <property type="evidence" value="ECO:0007669"/>
    <property type="project" value="InterPro"/>
</dbReference>
<dbReference type="GO" id="GO:0019843">
    <property type="term" value="F:rRNA binding"/>
    <property type="evidence" value="ECO:0007669"/>
    <property type="project" value="UniProtKB-UniRule"/>
</dbReference>
<dbReference type="GO" id="GO:0003735">
    <property type="term" value="F:structural constituent of ribosome"/>
    <property type="evidence" value="ECO:0007669"/>
    <property type="project" value="InterPro"/>
</dbReference>
<dbReference type="GO" id="GO:0000049">
    <property type="term" value="F:tRNA binding"/>
    <property type="evidence" value="ECO:0007669"/>
    <property type="project" value="UniProtKB-UniRule"/>
</dbReference>
<dbReference type="GO" id="GO:0006412">
    <property type="term" value="P:translation"/>
    <property type="evidence" value="ECO:0007669"/>
    <property type="project" value="UniProtKB-UniRule"/>
</dbReference>
<dbReference type="CDD" id="cd03368">
    <property type="entry name" value="Ribosomal_S12"/>
    <property type="match status" value="1"/>
</dbReference>
<dbReference type="FunFam" id="2.40.50.140:FF:000192">
    <property type="entry name" value="Mitochondrial ribosomal protein S12"/>
    <property type="match status" value="1"/>
</dbReference>
<dbReference type="Gene3D" id="2.40.50.140">
    <property type="entry name" value="Nucleic acid-binding proteins"/>
    <property type="match status" value="1"/>
</dbReference>
<dbReference type="HAMAP" id="MF_00403_B">
    <property type="entry name" value="Ribosomal_uS12_B"/>
    <property type="match status" value="1"/>
</dbReference>
<dbReference type="InterPro" id="IPR012340">
    <property type="entry name" value="NA-bd_OB-fold"/>
</dbReference>
<dbReference type="InterPro" id="IPR006032">
    <property type="entry name" value="Ribosomal_uS12"/>
</dbReference>
<dbReference type="InterPro" id="IPR005679">
    <property type="entry name" value="Ribosomal_uS12_bac"/>
</dbReference>
<dbReference type="NCBIfam" id="TIGR00981">
    <property type="entry name" value="rpsL_bact"/>
    <property type="match status" value="1"/>
</dbReference>
<dbReference type="PANTHER" id="PTHR11652">
    <property type="entry name" value="30S RIBOSOMAL PROTEIN S12 FAMILY MEMBER"/>
    <property type="match status" value="1"/>
</dbReference>
<dbReference type="Pfam" id="PF00164">
    <property type="entry name" value="Ribosom_S12_S23"/>
    <property type="match status" value="1"/>
</dbReference>
<dbReference type="PIRSF" id="PIRSF002133">
    <property type="entry name" value="Ribosomal_S12/S23"/>
    <property type="match status" value="1"/>
</dbReference>
<dbReference type="PRINTS" id="PR01034">
    <property type="entry name" value="RIBOSOMALS12"/>
</dbReference>
<dbReference type="SUPFAM" id="SSF50249">
    <property type="entry name" value="Nucleic acid-binding proteins"/>
    <property type="match status" value="1"/>
</dbReference>
<dbReference type="PROSITE" id="PS00055">
    <property type="entry name" value="RIBOSOMAL_S12"/>
    <property type="match status" value="1"/>
</dbReference>
<comment type="function">
    <text evidence="1">With S4 and S5 plays an important role in translational accuracy.</text>
</comment>
<comment type="function">
    <text evidence="1">Interacts with and stabilizes bases of the 16S rRNA that are involved in tRNA selection in the A site and with the mRNA backbone. Located at the interface of the 30S and 50S subunits, it traverses the body of the 30S subunit contacting proteins on the other side and probably holding the rRNA structure together. The combined cluster of proteins S8, S12 and S17 appears to hold together the shoulder and platform of the 30S subunit.</text>
</comment>
<comment type="subunit">
    <text evidence="1">Part of the 30S ribosomal subunit. Contacts proteins S8 and S17. May interact with IF1 in the 30S initiation complex.</text>
</comment>
<comment type="similarity">
    <text evidence="1">Belongs to the universal ribosomal protein uS12 family.</text>
</comment>
<comment type="caution">
    <text evidence="3">Because the enzyme that would modify Asp-89 to 3-methylthioaspartic acid has not been found in the proteome of this organism, that modification is not predicted.</text>
</comment>
<sequence>MPTYNQLVRFGRKSKTRKTKSPALESNPFKSGVCLVVKTVTPKKPNSALRKIATVRLSNKRTVNAYIPGEKHSVKEHDRVLVRGGQVPDLPGVKYHIVLGAYDIAGVKGRKQGRSRYGAHRKQVAATKK</sequence>
<feature type="chain" id="PRO_0000146299" description="Small ribosomal subunit protein uS12">
    <location>
        <begin position="1"/>
        <end position="129"/>
    </location>
</feature>
<feature type="region of interest" description="Disordered" evidence="2">
    <location>
        <begin position="110"/>
        <end position="129"/>
    </location>
</feature>
<reference key="1">
    <citation type="submission" date="1993-10" db="EMBL/GenBank/DDBJ databases">
        <authorList>
            <person name="Wood D.O."/>
        </authorList>
    </citation>
    <scope>NUCLEOTIDE SEQUENCE [GENOMIC DNA]</scope>
    <source>
        <strain>Madrid E</strain>
    </source>
</reference>
<reference key="2">
    <citation type="journal article" date="1998" name="Nature">
        <title>The genome sequence of Rickettsia prowazekii and the origin of mitochondria.</title>
        <authorList>
            <person name="Andersson S.G.E."/>
            <person name="Zomorodipour A."/>
            <person name="Andersson J.O."/>
            <person name="Sicheritz-Ponten T."/>
            <person name="Alsmark U.C.M."/>
            <person name="Podowski R.M."/>
            <person name="Naeslund A.K."/>
            <person name="Eriksson A.-S."/>
            <person name="Winkler H.H."/>
            <person name="Kurland C.G."/>
        </authorList>
    </citation>
    <scope>NUCLEOTIDE SEQUENCE [LARGE SCALE GENOMIC DNA]</scope>
    <source>
        <strain>Madrid E</strain>
    </source>
</reference>
<protein>
    <recommendedName>
        <fullName evidence="1">Small ribosomal subunit protein uS12</fullName>
    </recommendedName>
    <alternativeName>
        <fullName evidence="3">30S ribosomal protein S12</fullName>
    </alternativeName>
</protein>
<gene>
    <name evidence="1" type="primary">rpsL</name>
    <name type="ordered locus">RP130</name>
</gene>
<organism>
    <name type="scientific">Rickettsia prowazekii (strain Madrid E)</name>
    <dbReference type="NCBI Taxonomy" id="272947"/>
    <lineage>
        <taxon>Bacteria</taxon>
        <taxon>Pseudomonadati</taxon>
        <taxon>Pseudomonadota</taxon>
        <taxon>Alphaproteobacteria</taxon>
        <taxon>Rickettsiales</taxon>
        <taxon>Rickettsiaceae</taxon>
        <taxon>Rickettsieae</taxon>
        <taxon>Rickettsia</taxon>
        <taxon>typhus group</taxon>
    </lineage>
</organism>
<name>RS12_RICPR</name>